<name>Y960_SACI1</name>
<comment type="similarity">
    <text evidence="1">Belongs to the UPF0215 family.</text>
</comment>
<accession>C3NFV1</accession>
<protein>
    <recommendedName>
        <fullName evidence="1">UPF0215 protein YN1551_0960</fullName>
    </recommendedName>
</protein>
<feature type="chain" id="PRO_1000212137" description="UPF0215 protein YN1551_0960">
    <location>
        <begin position="1"/>
        <end position="179"/>
    </location>
</feature>
<proteinExistence type="inferred from homology"/>
<organism>
    <name type="scientific">Saccharolobus islandicus (strain Y.N.15.51 / Yellowstone #2)</name>
    <name type="common">Sulfolobus islandicus</name>
    <dbReference type="NCBI Taxonomy" id="419942"/>
    <lineage>
        <taxon>Archaea</taxon>
        <taxon>Thermoproteota</taxon>
        <taxon>Thermoprotei</taxon>
        <taxon>Sulfolobales</taxon>
        <taxon>Sulfolobaceae</taxon>
        <taxon>Saccharolobus</taxon>
    </lineage>
</organism>
<gene>
    <name type="ordered locus">YN1551_0960</name>
</gene>
<dbReference type="EMBL" id="CP001404">
    <property type="protein sequence ID" value="ACP48069.1"/>
    <property type="molecule type" value="Genomic_DNA"/>
</dbReference>
<dbReference type="RefSeq" id="WP_012714017.1">
    <property type="nucleotide sequence ID" value="NC_012623.1"/>
</dbReference>
<dbReference type="SMR" id="C3NFV1"/>
<dbReference type="GeneID" id="7809408"/>
<dbReference type="KEGG" id="sin:YN1551_0960"/>
<dbReference type="HOGENOM" id="CLU_095956_1_1_2"/>
<dbReference type="Proteomes" id="UP000006818">
    <property type="component" value="Chromosome"/>
</dbReference>
<dbReference type="Gene3D" id="3.30.2170.10">
    <property type="entry name" value="archaeoglobus fulgidus dsm 4304 superfamily"/>
    <property type="match status" value="1"/>
</dbReference>
<dbReference type="HAMAP" id="MF_00582">
    <property type="entry name" value="UPF0215"/>
    <property type="match status" value="1"/>
</dbReference>
<dbReference type="InterPro" id="IPR002802">
    <property type="entry name" value="Endo_dU"/>
</dbReference>
<dbReference type="PANTHER" id="PTHR39518">
    <property type="entry name" value="UPF0215 PROTEIN MJ1150"/>
    <property type="match status" value="1"/>
</dbReference>
<dbReference type="PANTHER" id="PTHR39518:SF2">
    <property type="entry name" value="UPF0215 PROTEIN MJ1150"/>
    <property type="match status" value="1"/>
</dbReference>
<dbReference type="Pfam" id="PF01949">
    <property type="entry name" value="DUF99"/>
    <property type="match status" value="1"/>
</dbReference>
<dbReference type="PIRSF" id="PIRSF006380">
    <property type="entry name" value="UCP006380"/>
    <property type="match status" value="1"/>
</dbReference>
<reference key="1">
    <citation type="journal article" date="2009" name="Proc. Natl. Acad. Sci. U.S.A.">
        <title>Biogeography of the Sulfolobus islandicus pan-genome.</title>
        <authorList>
            <person name="Reno M.L."/>
            <person name="Held N.L."/>
            <person name="Fields C.J."/>
            <person name="Burke P.V."/>
            <person name="Whitaker R.J."/>
        </authorList>
    </citation>
    <scope>NUCLEOTIDE SEQUENCE [LARGE SCALE GENOMIC DNA]</scope>
    <source>
        <strain>Y.N.15.51 / Yellowstone #2</strain>
    </source>
</reference>
<sequence length="179" mass="20322">MPISGVDDGYFPLSYKGGKGKTALVVVTFYDYEMIDLDWGLITVDGNDATDVLKQLRKGDIVILDGVIFAGFNYIVPYSDNMIFFYSKMPKVDLIKNALMKHFQADTERVREILYVLNNLKQIPTKRGNVFLYSTVELSLAKSIIEKYQIYSKIPEVLKSAHVIASSLGRFLARYKKTV</sequence>
<evidence type="ECO:0000255" key="1">
    <source>
        <dbReference type="HAMAP-Rule" id="MF_00582"/>
    </source>
</evidence>